<dbReference type="EMBL" id="M72709">
    <property type="protein sequence ID" value="AAA35565.1"/>
    <property type="molecule type" value="mRNA"/>
</dbReference>
<dbReference type="EMBL" id="M72709">
    <property type="protein sequence ID" value="AAA35564.1"/>
    <property type="molecule type" value="mRNA"/>
</dbReference>
<dbReference type="EMBL" id="M69040">
    <property type="protein sequence ID" value="AAA03476.1"/>
    <property type="molecule type" value="mRNA"/>
</dbReference>
<dbReference type="EMBL" id="AB062124">
    <property type="protein sequence ID" value="BAB93456.1"/>
    <property type="molecule type" value="mRNA"/>
</dbReference>
<dbReference type="EMBL" id="AK312781">
    <property type="protein sequence ID" value="BAG35644.1"/>
    <property type="molecule type" value="mRNA"/>
</dbReference>
<dbReference type="EMBL" id="CH471109">
    <property type="protein sequence ID" value="EAW94485.1"/>
    <property type="molecule type" value="Genomic_DNA"/>
</dbReference>
<dbReference type="EMBL" id="CH471109">
    <property type="protein sequence ID" value="EAW94486.1"/>
    <property type="molecule type" value="Genomic_DNA"/>
</dbReference>
<dbReference type="EMBL" id="BC010264">
    <property type="protein sequence ID" value="AAH10264.1"/>
    <property type="molecule type" value="mRNA"/>
</dbReference>
<dbReference type="EMBL" id="BC033785">
    <property type="protein sequence ID" value="AAH33785.1"/>
    <property type="molecule type" value="mRNA"/>
</dbReference>
<dbReference type="CCDS" id="CCDS11600.1">
    <molecule id="Q07955-1"/>
</dbReference>
<dbReference type="CCDS" id="CCDS58580.1">
    <molecule id="Q07955-3"/>
</dbReference>
<dbReference type="PIR" id="A40040">
    <property type="entry name" value="A40040"/>
</dbReference>
<dbReference type="PIR" id="B40040">
    <property type="entry name" value="B40040"/>
</dbReference>
<dbReference type="PIR" id="C40040">
    <property type="entry name" value="C40040"/>
</dbReference>
<dbReference type="RefSeq" id="NP_001071634.1">
    <molecule id="Q07955-3"/>
    <property type="nucleotide sequence ID" value="NM_001078166.2"/>
</dbReference>
<dbReference type="RefSeq" id="NP_008855.1">
    <molecule id="Q07955-1"/>
    <property type="nucleotide sequence ID" value="NM_006924.5"/>
</dbReference>
<dbReference type="RefSeq" id="XP_047292479.1">
    <molecule id="Q07955-1"/>
    <property type="nucleotide sequence ID" value="XM_047436523.1"/>
</dbReference>
<dbReference type="RefSeq" id="XP_047292480.1">
    <molecule id="Q07955-1"/>
    <property type="nucleotide sequence ID" value="XM_047436524.1"/>
</dbReference>
<dbReference type="RefSeq" id="XP_047292481.1">
    <molecule id="Q07955-1"/>
    <property type="nucleotide sequence ID" value="XM_047436525.1"/>
</dbReference>
<dbReference type="RefSeq" id="XP_047292482.1">
    <molecule id="Q07955-1"/>
    <property type="nucleotide sequence ID" value="XM_047436526.1"/>
</dbReference>
<dbReference type="RefSeq" id="XP_047292483.1">
    <molecule id="Q07955-1"/>
    <property type="nucleotide sequence ID" value="XM_047436527.1"/>
</dbReference>
<dbReference type="RefSeq" id="XP_047292484.1">
    <molecule id="Q07955-1"/>
    <property type="nucleotide sequence ID" value="XM_047436528.1"/>
</dbReference>
<dbReference type="RefSeq" id="XP_047292485.1">
    <molecule id="Q07955-3"/>
    <property type="nucleotide sequence ID" value="XM_047436529.1"/>
</dbReference>
<dbReference type="PDB" id="1X4A">
    <property type="method" value="NMR"/>
    <property type="chains" value="A=1-96"/>
</dbReference>
<dbReference type="PDB" id="2M7S">
    <property type="method" value="NMR"/>
    <property type="chains" value="A=106-195"/>
</dbReference>
<dbReference type="PDB" id="2M8D">
    <property type="method" value="NMR"/>
    <property type="chains" value="B=107-196"/>
</dbReference>
<dbReference type="PDB" id="2O3D">
    <property type="method" value="NMR"/>
    <property type="chains" value="A=107-215"/>
</dbReference>
<dbReference type="PDB" id="3BEG">
    <property type="method" value="X-ray"/>
    <property type="resolution" value="2.90 A"/>
    <property type="chains" value="B=105-219"/>
</dbReference>
<dbReference type="PDB" id="4C0O">
    <property type="method" value="X-ray"/>
    <property type="resolution" value="2.56 A"/>
    <property type="chains" value="C/D=106-230"/>
</dbReference>
<dbReference type="PDB" id="6HPJ">
    <property type="method" value="NMR"/>
    <property type="chains" value="B=1-97"/>
</dbReference>
<dbReference type="PDB" id="7ABG">
    <property type="method" value="EM"/>
    <property type="resolution" value="7.80 A"/>
    <property type="chains" value="A6=1-248"/>
</dbReference>
<dbReference type="PDB" id="8QO9">
    <property type="method" value="EM"/>
    <property type="resolution" value="5.29 A"/>
    <property type="chains" value="z=1-248"/>
</dbReference>
<dbReference type="PDBsum" id="1X4A"/>
<dbReference type="PDBsum" id="2M7S"/>
<dbReference type="PDBsum" id="2M8D"/>
<dbReference type="PDBsum" id="2O3D"/>
<dbReference type="PDBsum" id="3BEG"/>
<dbReference type="PDBsum" id="4C0O"/>
<dbReference type="PDBsum" id="6HPJ"/>
<dbReference type="PDBsum" id="7ABG"/>
<dbReference type="PDBsum" id="8QO9"/>
<dbReference type="BMRB" id="Q07955"/>
<dbReference type="EMDB" id="EMD-11695"/>
<dbReference type="EMDB" id="EMD-18529"/>
<dbReference type="SMR" id="Q07955"/>
<dbReference type="BioGRID" id="112324">
    <property type="interactions" value="589"/>
</dbReference>
<dbReference type="CORUM" id="Q07955"/>
<dbReference type="DIP" id="DIP-2155N"/>
<dbReference type="FunCoup" id="Q07955">
    <property type="interactions" value="4677"/>
</dbReference>
<dbReference type="IntAct" id="Q07955">
    <property type="interactions" value="546"/>
</dbReference>
<dbReference type="MINT" id="Q07955"/>
<dbReference type="STRING" id="9606.ENSP00000258962"/>
<dbReference type="ChEMBL" id="CHEMBL4295805"/>
<dbReference type="DrugBank" id="DB09130">
    <property type="generic name" value="Copper"/>
</dbReference>
<dbReference type="GlyGen" id="Q07955">
    <property type="glycosylation" value="1 site, 1 O-linked glycan (1 site)"/>
</dbReference>
<dbReference type="iPTMnet" id="Q07955"/>
<dbReference type="PhosphoSitePlus" id="Q07955"/>
<dbReference type="SwissPalm" id="Q07955"/>
<dbReference type="BioMuta" id="SRSF1"/>
<dbReference type="DMDM" id="730773"/>
<dbReference type="jPOST" id="Q07955"/>
<dbReference type="MassIVE" id="Q07955"/>
<dbReference type="PaxDb" id="9606-ENSP00000258962"/>
<dbReference type="PeptideAtlas" id="Q07955"/>
<dbReference type="ProteomicsDB" id="58560">
    <molecule id="Q07955-1"/>
</dbReference>
<dbReference type="ProteomicsDB" id="58561">
    <molecule id="Q07955-2"/>
</dbReference>
<dbReference type="ProteomicsDB" id="58562">
    <molecule id="Q07955-3"/>
</dbReference>
<dbReference type="Pumba" id="Q07955"/>
<dbReference type="TopDownProteomics" id="Q07955-1">
    <molecule id="Q07955-1"/>
</dbReference>
<dbReference type="TopDownProteomics" id="Q07955-2">
    <molecule id="Q07955-2"/>
</dbReference>
<dbReference type="TopDownProteomics" id="Q07955-3">
    <molecule id="Q07955-3"/>
</dbReference>
<dbReference type="Antibodypedia" id="4585">
    <property type="antibodies" value="314 antibodies from 35 providers"/>
</dbReference>
<dbReference type="DNASU" id="6426"/>
<dbReference type="Ensembl" id="ENST00000258962.5">
    <molecule id="Q07955-1"/>
    <property type="protein sequence ID" value="ENSP00000258962.4"/>
    <property type="gene ID" value="ENSG00000136450.13"/>
</dbReference>
<dbReference type="Ensembl" id="ENST00000581979.5">
    <molecule id="Q07955-3"/>
    <property type="protein sequence ID" value="ENSP00000463223.1"/>
    <property type="gene ID" value="ENSG00000136450.13"/>
</dbReference>
<dbReference type="Ensembl" id="ENST00000582730.6">
    <molecule id="Q07955-3"/>
    <property type="protein sequence ID" value="ENSP00000462215.1"/>
    <property type="gene ID" value="ENSG00000136450.13"/>
</dbReference>
<dbReference type="GeneID" id="6426"/>
<dbReference type="KEGG" id="hsa:6426"/>
<dbReference type="MANE-Select" id="ENST00000258962.5">
    <property type="protein sequence ID" value="ENSP00000258962.4"/>
    <property type="RefSeq nucleotide sequence ID" value="NM_006924.5"/>
    <property type="RefSeq protein sequence ID" value="NP_008855.1"/>
</dbReference>
<dbReference type="UCSC" id="uc002ivi.4">
    <molecule id="Q07955-1"/>
    <property type="organism name" value="human"/>
</dbReference>
<dbReference type="AGR" id="HGNC:10780"/>
<dbReference type="CTD" id="6426"/>
<dbReference type="DisGeNET" id="6426"/>
<dbReference type="GeneCards" id="SRSF1"/>
<dbReference type="HGNC" id="HGNC:10780">
    <property type="gene designation" value="SRSF1"/>
</dbReference>
<dbReference type="HPA" id="ENSG00000136450">
    <property type="expression patterns" value="Low tissue specificity"/>
</dbReference>
<dbReference type="MalaCards" id="SRSF1"/>
<dbReference type="MIM" id="600812">
    <property type="type" value="gene"/>
</dbReference>
<dbReference type="MIM" id="620489">
    <property type="type" value="phenotype"/>
</dbReference>
<dbReference type="neXtProt" id="NX_Q07955"/>
<dbReference type="OpenTargets" id="ENSG00000136450"/>
<dbReference type="PharmGKB" id="PA35696"/>
<dbReference type="VEuPathDB" id="HostDB:ENSG00000136450"/>
<dbReference type="eggNOG" id="KOG0105">
    <property type="taxonomic scope" value="Eukaryota"/>
</dbReference>
<dbReference type="GeneTree" id="ENSGT00940000155585"/>
<dbReference type="HOGENOM" id="CLU_012062_34_5_1"/>
<dbReference type="InParanoid" id="Q07955"/>
<dbReference type="OMA" id="CSIAWPL"/>
<dbReference type="OrthoDB" id="1099063at2759"/>
<dbReference type="PAN-GO" id="Q07955">
    <property type="GO annotations" value="3 GO annotations based on evolutionary models"/>
</dbReference>
<dbReference type="PhylomeDB" id="Q07955"/>
<dbReference type="TreeFam" id="TF106261"/>
<dbReference type="PathwayCommons" id="Q07955"/>
<dbReference type="Reactome" id="R-HSA-159236">
    <property type="pathway name" value="Transport of Mature mRNA derived from an Intron-Containing Transcript"/>
</dbReference>
<dbReference type="Reactome" id="R-HSA-72163">
    <property type="pathway name" value="mRNA Splicing - Major Pathway"/>
</dbReference>
<dbReference type="Reactome" id="R-HSA-72165">
    <property type="pathway name" value="mRNA Splicing - Minor Pathway"/>
</dbReference>
<dbReference type="Reactome" id="R-HSA-72187">
    <property type="pathway name" value="mRNA 3'-end processing"/>
</dbReference>
<dbReference type="Reactome" id="R-HSA-72203">
    <property type="pathway name" value="Processing of Capped Intron-Containing Pre-mRNA"/>
</dbReference>
<dbReference type="Reactome" id="R-HSA-73856">
    <property type="pathway name" value="RNA Polymerase II Transcription Termination"/>
</dbReference>
<dbReference type="SignaLink" id="Q07955"/>
<dbReference type="SIGNOR" id="Q07955"/>
<dbReference type="BioGRID-ORCS" id="6426">
    <property type="hits" value="845 hits in 1171 CRISPR screens"/>
</dbReference>
<dbReference type="CD-CODE" id="318A8771">
    <property type="entry name" value="Synthetic Condensate 000319"/>
</dbReference>
<dbReference type="CD-CODE" id="804901D1">
    <property type="entry name" value="Nuclear speckle"/>
</dbReference>
<dbReference type="CD-CODE" id="81D2A7B6">
    <property type="entry name" value="Nuclear stress body"/>
</dbReference>
<dbReference type="CD-CODE" id="91857CE7">
    <property type="entry name" value="Nucleolus"/>
</dbReference>
<dbReference type="CD-CODE" id="DEE660B4">
    <property type="entry name" value="Stress granule"/>
</dbReference>
<dbReference type="ChiTaRS" id="SRSF1">
    <property type="organism name" value="human"/>
</dbReference>
<dbReference type="EvolutionaryTrace" id="Q07955"/>
<dbReference type="GeneWiki" id="ASF/SF2"/>
<dbReference type="GenomeRNAi" id="6426"/>
<dbReference type="Pharos" id="Q07955">
    <property type="development level" value="Tbio"/>
</dbReference>
<dbReference type="PRO" id="PR:Q07955"/>
<dbReference type="Proteomes" id="UP000005640">
    <property type="component" value="Chromosome 17"/>
</dbReference>
<dbReference type="RNAct" id="Q07955">
    <property type="molecule type" value="protein"/>
</dbReference>
<dbReference type="Bgee" id="ENSG00000136450">
    <property type="expression patterns" value="Expressed in ganglionic eminence and 177 other cell types or tissues"/>
</dbReference>
<dbReference type="ExpressionAtlas" id="Q07955">
    <property type="expression patterns" value="baseline and differential"/>
</dbReference>
<dbReference type="GO" id="GO:0071013">
    <property type="term" value="C:catalytic step 2 spliceosome"/>
    <property type="evidence" value="ECO:0000314"/>
    <property type="project" value="UniProtKB"/>
</dbReference>
<dbReference type="GO" id="GO:0005737">
    <property type="term" value="C:cytoplasm"/>
    <property type="evidence" value="ECO:0000314"/>
    <property type="project" value="UniProtKB"/>
</dbReference>
<dbReference type="GO" id="GO:0005635">
    <property type="term" value="C:nuclear envelope"/>
    <property type="evidence" value="ECO:0007669"/>
    <property type="project" value="Ensembl"/>
</dbReference>
<dbReference type="GO" id="GO:0016607">
    <property type="term" value="C:nuclear speck"/>
    <property type="evidence" value="ECO:0000314"/>
    <property type="project" value="UniProtKB"/>
</dbReference>
<dbReference type="GO" id="GO:0005654">
    <property type="term" value="C:nucleoplasm"/>
    <property type="evidence" value="ECO:0000314"/>
    <property type="project" value="UniProtKB"/>
</dbReference>
<dbReference type="GO" id="GO:0005634">
    <property type="term" value="C:nucleus"/>
    <property type="evidence" value="ECO:0000314"/>
    <property type="project" value="UniProtKB"/>
</dbReference>
<dbReference type="GO" id="GO:0044547">
    <property type="term" value="F:DNA topoisomerase binding"/>
    <property type="evidence" value="ECO:0000353"/>
    <property type="project" value="CAFA"/>
</dbReference>
<dbReference type="GO" id="GO:0003729">
    <property type="term" value="F:mRNA binding"/>
    <property type="evidence" value="ECO:0000314"/>
    <property type="project" value="MGI"/>
</dbReference>
<dbReference type="GO" id="GO:0043422">
    <property type="term" value="F:protein kinase B binding"/>
    <property type="evidence" value="ECO:0007669"/>
    <property type="project" value="Ensembl"/>
</dbReference>
<dbReference type="GO" id="GO:0003723">
    <property type="term" value="F:RNA binding"/>
    <property type="evidence" value="ECO:0000314"/>
    <property type="project" value="UniProtKB"/>
</dbReference>
<dbReference type="GO" id="GO:0050733">
    <property type="term" value="F:RS domain binding"/>
    <property type="evidence" value="ECO:0007669"/>
    <property type="project" value="Ensembl"/>
</dbReference>
<dbReference type="GO" id="GO:0000380">
    <property type="term" value="P:alternative mRNA splicing, via spliceosome"/>
    <property type="evidence" value="ECO:0000314"/>
    <property type="project" value="GO_Central"/>
</dbReference>
<dbReference type="GO" id="GO:0060048">
    <property type="term" value="P:cardiac muscle contraction"/>
    <property type="evidence" value="ECO:0007669"/>
    <property type="project" value="Ensembl"/>
</dbReference>
<dbReference type="GO" id="GO:0001701">
    <property type="term" value="P:in utero embryonic development"/>
    <property type="evidence" value="ECO:0007669"/>
    <property type="project" value="Ensembl"/>
</dbReference>
<dbReference type="GO" id="GO:0097400">
    <property type="term" value="P:interleukin-17-mediated signaling pathway"/>
    <property type="evidence" value="ECO:0007669"/>
    <property type="project" value="Ensembl"/>
</dbReference>
<dbReference type="GO" id="GO:0097421">
    <property type="term" value="P:liver regeneration"/>
    <property type="evidence" value="ECO:0007669"/>
    <property type="project" value="Ensembl"/>
</dbReference>
<dbReference type="GO" id="GO:0000395">
    <property type="term" value="P:mRNA 5'-splice site recognition"/>
    <property type="evidence" value="ECO:0000314"/>
    <property type="project" value="UniProtKB"/>
</dbReference>
<dbReference type="GO" id="GO:0006397">
    <property type="term" value="P:mRNA processing"/>
    <property type="evidence" value="ECO:0000304"/>
    <property type="project" value="ProtInc"/>
</dbReference>
<dbReference type="GO" id="GO:0006376">
    <property type="term" value="P:mRNA splice site recognition"/>
    <property type="evidence" value="ECO:0000304"/>
    <property type="project" value="ProtInc"/>
</dbReference>
<dbReference type="GO" id="GO:0000398">
    <property type="term" value="P:mRNA splicing, via spliceosome"/>
    <property type="evidence" value="ECO:0000305"/>
    <property type="project" value="UniProtKB"/>
</dbReference>
<dbReference type="GO" id="GO:0048255">
    <property type="term" value="P:mRNA stabilization"/>
    <property type="evidence" value="ECO:0007669"/>
    <property type="project" value="Ensembl"/>
</dbReference>
<dbReference type="GO" id="GO:0051028">
    <property type="term" value="P:mRNA transport"/>
    <property type="evidence" value="ECO:0007669"/>
    <property type="project" value="UniProtKB-KW"/>
</dbReference>
<dbReference type="GO" id="GO:0048709">
    <property type="term" value="P:oligodendrocyte differentiation"/>
    <property type="evidence" value="ECO:0007669"/>
    <property type="project" value="Ensembl"/>
</dbReference>
<dbReference type="GO" id="GO:0033120">
    <property type="term" value="P:positive regulation of RNA splicing"/>
    <property type="evidence" value="ECO:0007669"/>
    <property type="project" value="Ensembl"/>
</dbReference>
<dbReference type="GO" id="GO:0034504">
    <property type="term" value="P:protein localization to nucleus"/>
    <property type="evidence" value="ECO:0007669"/>
    <property type="project" value="Ensembl"/>
</dbReference>
<dbReference type="GO" id="GO:0110012">
    <property type="term" value="P:protein localization to P-body"/>
    <property type="evidence" value="ECO:0007669"/>
    <property type="project" value="Ensembl"/>
</dbReference>
<dbReference type="GO" id="GO:0043484">
    <property type="term" value="P:regulation of RNA splicing"/>
    <property type="evidence" value="ECO:0000250"/>
    <property type="project" value="UniProtKB"/>
</dbReference>
<dbReference type="GO" id="GO:0023019">
    <property type="term" value="P:signal transduction involved in regulation of gene expression"/>
    <property type="evidence" value="ECO:0007669"/>
    <property type="project" value="Ensembl"/>
</dbReference>
<dbReference type="CDD" id="cd12597">
    <property type="entry name" value="RRM1_SRSF1"/>
    <property type="match status" value="1"/>
</dbReference>
<dbReference type="CDD" id="cd12767">
    <property type="entry name" value="RRM2_SRSF1"/>
    <property type="match status" value="1"/>
</dbReference>
<dbReference type="DisProt" id="DP01641"/>
<dbReference type="FunFam" id="3.30.70.330:FF:000053">
    <property type="entry name" value="Serine/arginine-rich splicing factor 1"/>
    <property type="match status" value="1"/>
</dbReference>
<dbReference type="FunFam" id="3.30.70.330:FF:000170">
    <property type="entry name" value="Serine/arginine-rich splicing factor 1"/>
    <property type="match status" value="1"/>
</dbReference>
<dbReference type="Gene3D" id="3.30.70.330">
    <property type="match status" value="2"/>
</dbReference>
<dbReference type="InterPro" id="IPR012677">
    <property type="entry name" value="Nucleotide-bd_a/b_plait_sf"/>
</dbReference>
<dbReference type="InterPro" id="IPR035979">
    <property type="entry name" value="RBD_domain_sf"/>
</dbReference>
<dbReference type="InterPro" id="IPR000504">
    <property type="entry name" value="RRM_dom"/>
</dbReference>
<dbReference type="InterPro" id="IPR050374">
    <property type="entry name" value="RRT5_SRSF_SR"/>
</dbReference>
<dbReference type="InterPro" id="IPR034520">
    <property type="entry name" value="SRSF1_RRM1"/>
</dbReference>
<dbReference type="InterPro" id="IPR029538">
    <property type="entry name" value="SRSF1_RRM2"/>
</dbReference>
<dbReference type="PANTHER" id="PTHR23003">
    <property type="entry name" value="RNA RECOGNITION MOTIF RRM DOMAIN CONTAINING PROTEIN"/>
    <property type="match status" value="1"/>
</dbReference>
<dbReference type="PANTHER" id="PTHR23003:SF66">
    <property type="entry name" value="SERINE_ARGININE-RICH SPLICING FACTOR 1"/>
    <property type="match status" value="1"/>
</dbReference>
<dbReference type="Pfam" id="PF00076">
    <property type="entry name" value="RRM_1"/>
    <property type="match status" value="2"/>
</dbReference>
<dbReference type="SMART" id="SM00360">
    <property type="entry name" value="RRM"/>
    <property type="match status" value="2"/>
</dbReference>
<dbReference type="SUPFAM" id="SSF54928">
    <property type="entry name" value="RNA-binding domain, RBD"/>
    <property type="match status" value="1"/>
</dbReference>
<dbReference type="PROSITE" id="PS50102">
    <property type="entry name" value="RRM"/>
    <property type="match status" value="2"/>
</dbReference>
<feature type="initiator methionine" description="Removed" evidence="38">
    <location>
        <position position="1"/>
    </location>
</feature>
<feature type="chain" id="PRO_0000081911" description="Serine/arginine-rich splicing factor 1">
    <location>
        <begin position="2"/>
        <end position="248"/>
    </location>
</feature>
<feature type="domain" description="RRM 1" evidence="2">
    <location>
        <begin position="16"/>
        <end position="91"/>
    </location>
</feature>
<feature type="domain" description="RRM 2" evidence="2">
    <location>
        <begin position="121"/>
        <end position="195"/>
    </location>
</feature>
<feature type="region of interest" description="Disordered" evidence="3">
    <location>
        <begin position="88"/>
        <end position="134"/>
    </location>
</feature>
<feature type="region of interest" description="Disordered" evidence="3">
    <location>
        <begin position="191"/>
        <end position="248"/>
    </location>
</feature>
<feature type="region of interest" description="Interaction with SAFB1">
    <location>
        <begin position="198"/>
        <end position="247"/>
    </location>
</feature>
<feature type="compositionally biased region" description="Gly residues" evidence="3">
    <location>
        <begin position="93"/>
        <end position="108"/>
    </location>
</feature>
<feature type="compositionally biased region" description="Basic residues" evidence="3">
    <location>
        <begin position="205"/>
        <end position="248"/>
    </location>
</feature>
<feature type="modified residue" description="N-acetylserine" evidence="38">
    <location>
        <position position="2"/>
    </location>
</feature>
<feature type="modified residue" description="Phosphoserine" evidence="38 39">
    <location>
        <position position="2"/>
    </location>
</feature>
<feature type="modified residue" description="N6-acetyllysine; alternate" evidence="36">
    <location>
        <position position="38"/>
    </location>
</feature>
<feature type="modified residue" description="Asymmetric dimethylarginine; alternate" evidence="17">
    <location>
        <position position="93"/>
    </location>
</feature>
<feature type="modified residue" description="Omega-N-methylarginine; alternate" evidence="40">
    <location>
        <position position="93"/>
    </location>
</feature>
<feature type="modified residue" description="Asymmetric dimethylarginine; alternate" evidence="17">
    <location>
        <position position="97"/>
    </location>
</feature>
<feature type="modified residue" description="Omega-N-methylarginine; alternate" evidence="40">
    <location>
        <position position="97"/>
    </location>
</feature>
<feature type="modified residue" description="Asymmetric dimethylarginine; alternate" evidence="17">
    <location>
        <position position="109"/>
    </location>
</feature>
<feature type="modified residue" description="Omega-N-methylarginine; alternate" evidence="40">
    <location>
        <position position="109"/>
    </location>
</feature>
<feature type="modified residue" description="Omega-N-methylarginine" evidence="40">
    <location>
        <position position="111"/>
    </location>
</feature>
<feature type="modified residue" description="Phosphoserine" evidence="39">
    <location>
        <position position="133"/>
    </location>
</feature>
<feature type="modified residue" description="N6-acetyllysine" evidence="36">
    <location>
        <position position="179"/>
    </location>
</feature>
<feature type="modified residue" description="Phosphoserine" evidence="35 37 38 39 41">
    <location>
        <position position="199"/>
    </location>
</feature>
<feature type="modified residue" description="Phosphoserine" evidence="20 39 41">
    <location>
        <position position="201"/>
    </location>
</feature>
<feature type="modified residue" description="Phosphotyrosine" evidence="41">
    <location>
        <position position="202"/>
    </location>
</feature>
<feature type="modified residue" description="Phosphoserine" evidence="35 39">
    <location>
        <position position="205"/>
    </location>
</feature>
<feature type="modified residue" description="Phosphoserine" evidence="20">
    <location>
        <position position="207"/>
    </location>
</feature>
<feature type="modified residue" description="Phosphoserine" evidence="20">
    <location>
        <position position="209"/>
    </location>
</feature>
<feature type="modified residue" description="Phosphoserine" evidence="35">
    <location>
        <position position="231"/>
    </location>
</feature>
<feature type="modified residue" description="Phosphoserine" evidence="35">
    <location>
        <position position="234"/>
    </location>
</feature>
<feature type="modified residue" description="Phosphoserine" evidence="35">
    <location>
        <position position="238"/>
    </location>
</feature>
<feature type="cross-link" description="Glycyl lysine isopeptide (Lys-Gly) (interchain with G-Cter in SUMO2)" evidence="43">
    <location>
        <position position="30"/>
    </location>
</feature>
<feature type="cross-link" description="Glycyl lysine isopeptide (Lys-Gly) (interchain with G-Cter in SUMO2); alternate" evidence="42 43">
    <location>
        <position position="38"/>
    </location>
</feature>
<feature type="splice variant" id="VSP_005856" description="In isoform ASF-2." evidence="31">
    <original>GETAYIRVKVDGPRSPSYGRSRSRSRSRSRSRSRSNSRSRSYSPRRSRGSPRYSPRHSRSRSRT</original>
    <variation>FCLSNREKLPTSGLKLMGPEVQVMEDLDLEAVVVAEAVAEATAGVAVTPQGEAEDHHAILPVIADLALVHKMIGDTFCRTHVVYSFPLFSTIFSFFNSNCFVQNGLKC</variation>
    <location>
        <begin position="185"/>
        <end position="248"/>
    </location>
</feature>
<feature type="splice variant" id="VSP_005857" description="In isoform ASF-3." evidence="30">
    <original>GETAYIRVKVDGPRSPS</original>
    <variation>VGYTRILFFDQNWIQWS</variation>
    <location>
        <begin position="185"/>
        <end position="201"/>
    </location>
</feature>
<feature type="splice variant" id="VSP_005858" description="In isoform ASF-3." evidence="30">
    <location>
        <begin position="202"/>
        <end position="248"/>
    </location>
</feature>
<feature type="sequence variant" id="VAR_088937" description="In NEDFBA; likely pathogenic; dbSNP:rs2143492189." evidence="22">
    <original>P</original>
    <variation>L</variation>
    <location>
        <position position="24"/>
    </location>
</feature>
<feature type="sequence variant" id="VAR_088938" description="In NEDFBA; likely pathogenic." evidence="22">
    <location>
        <begin position="28"/>
        <end position="248"/>
    </location>
</feature>
<feature type="sequence variant" id="VAR_088939" description="In NEDFBA; likely pathogenic." evidence="22">
    <location>
        <begin position="33"/>
        <end position="248"/>
    </location>
</feature>
<feature type="sequence variant" id="VAR_088940" description="In NEDFBA; likely pathogenic." evidence="22">
    <original>G</original>
    <variation>V</variation>
    <location>
        <position position="40"/>
    </location>
</feature>
<feature type="sequence variant" id="VAR_088941" description="In NEDFBA; uncertain significance." evidence="22">
    <original>D</original>
    <variation>N</variation>
    <location>
        <position position="44"/>
    </location>
</feature>
<feature type="sequence variant" id="VAR_088942" description="In NEDFBA; likely pathogenic." evidence="22">
    <original>A</original>
    <variation>T</variation>
    <location>
        <position position="70"/>
    </location>
</feature>
<feature type="sequence variant" id="VAR_088943" description="In NEDFBA; likely pathogenic." evidence="22">
    <location>
        <begin position="77"/>
        <end position="248"/>
    </location>
</feature>
<feature type="sequence variant" id="VAR_088944" description="In NEDFBA; likely pathogenic." evidence="22">
    <original>L</original>
    <variation>R</variation>
    <location>
        <position position="84"/>
    </location>
</feature>
<feature type="sequence variant" id="VAR_035488" description="In a breast cancer sample; somatic mutation." evidence="10">
    <original>P</original>
    <variation>S</variation>
    <location>
        <position position="89"/>
    </location>
</feature>
<feature type="sequence variant" id="VAR_088945" description="In NEDFBA; likely pathogenic." evidence="22">
    <original>V</original>
    <variation>M</variation>
    <location>
        <position position="160"/>
    </location>
</feature>
<feature type="sequence variant" id="VAR_088946" description="In NEDFBA; uncertain significance." evidence="22">
    <original>H</original>
    <variation>R</variation>
    <location>
        <position position="183"/>
    </location>
</feature>
<feature type="mutagenesis site" description="In FV1; loss of ability to activate splicing. Slight reduction in splice site switching activity and no effect on RNA-binding." evidence="24">
    <original>FV</original>
    <variation>SR</variation>
    <location>
        <begin position="58"/>
        <end position="59"/>
    </location>
</feature>
<feature type="mutagenesis site" description="Predominantly localizes to cytoplasm and fails to modulate splicing of endogenous pre-mRNAs; when associated with Ala-97 and Ala-109." evidence="17">
    <original>R</original>
    <variation>A</variation>
    <location>
        <position position="93"/>
    </location>
</feature>
<feature type="mutagenesis site" description="Predominantly localizes to cytoplasm and fails to modulate splicing of endogenous pre-mRNAs; when associated with Ala-93 and Ala-109." evidence="17">
    <original>R</original>
    <variation>A</variation>
    <location>
        <position position="97"/>
    </location>
</feature>
<feature type="mutagenesis site" description="Predominantly localizes to cytoplasm and fails to modulate splicing of endogenous pre-mRNAs; when associated with Ala-93 and Ala-97." evidence="17">
    <original>R</original>
    <variation>A</variation>
    <location>
        <position position="109"/>
    </location>
</feature>
<feature type="mutagenesis site" description="In FV2; loss of ability to activate splicing. Great reduction in splice site switching activity and RNA-binding." evidence="24">
    <original>FV</original>
    <variation>SR</variation>
    <location>
        <begin position="162"/>
        <end position="163"/>
    </location>
</feature>
<feature type="mutagenesis site" description="In AV; loss of ability to activate splicing. Great reduction in splice site switching activity and no effect on RNA-binding." evidence="27">
    <original>F</original>
    <variation>A</variation>
    <location>
        <position position="162"/>
    </location>
</feature>
<feature type="mutagenesis site" description="Reduced nucleocytoplasmic shuttling; when associated with D-190." evidence="27">
    <original>F</original>
    <variation>D</variation>
    <location>
        <position position="162"/>
    </location>
</feature>
<feature type="mutagenesis site" description="Reduced nucleocytoplasmic shuttling; when associated with D-162." evidence="27">
    <original>F</original>
    <variation>D</variation>
    <location>
        <position position="180"/>
    </location>
</feature>
<feature type="mutagenesis site" description="In MR-B; strongly inhibits splicing." evidence="24">
    <location>
        <begin position="182"/>
        <end position="248"/>
    </location>
</feature>
<feature type="mutagenesis site" description="In MR-E; loss of ability to activate splicing." evidence="24">
    <location>
        <begin position="182"/>
        <end position="199"/>
    </location>
</feature>
<feature type="mutagenesis site" description="In MR-A; loss of ability to activate splicing." evidence="24">
    <location>
        <begin position="192"/>
        <end position="248"/>
    </location>
</feature>
<feature type="mutagenesis site" description="In MR-D; loss of ability to activate splicing." evidence="24">
    <location>
        <begin position="192"/>
        <end position="199"/>
    </location>
</feature>
<feature type="mutagenesis site" description="In RS-A; loss of ability to activate splicing but retains splice site switching." evidence="24">
    <location>
        <begin position="199"/>
        <end position="224"/>
    </location>
</feature>
<feature type="mutagenesis site" description="In RS-C; loss of ability to activate splicing but retains splice site switching." evidence="24">
    <location>
        <begin position="215"/>
        <end position="248"/>
    </location>
</feature>
<feature type="mutagenesis site" description="In RS-B; retains both splice activation and splice site switching activity." evidence="24">
    <location>
        <begin position="226"/>
        <end position="248"/>
    </location>
</feature>
<feature type="strand" evidence="50">
    <location>
        <begin position="9"/>
        <end position="11"/>
    </location>
</feature>
<feature type="strand" evidence="44">
    <location>
        <begin position="15"/>
        <end position="22"/>
    </location>
</feature>
<feature type="helix" evidence="44">
    <location>
        <begin position="29"/>
        <end position="36"/>
    </location>
</feature>
<feature type="helix" evidence="44">
    <location>
        <begin position="37"/>
        <end position="39"/>
    </location>
</feature>
<feature type="strand" evidence="44">
    <location>
        <begin position="42"/>
        <end position="47"/>
    </location>
</feature>
<feature type="strand" evidence="44">
    <location>
        <begin position="50"/>
        <end position="54"/>
    </location>
</feature>
<feature type="strand" evidence="44">
    <location>
        <begin position="57"/>
        <end position="62"/>
    </location>
</feature>
<feature type="helix" evidence="44">
    <location>
        <begin position="64"/>
        <end position="74"/>
    </location>
</feature>
<feature type="strand" evidence="44">
    <location>
        <begin position="85"/>
        <end position="87"/>
    </location>
</feature>
<feature type="strand" evidence="46">
    <location>
        <begin position="110"/>
        <end position="113"/>
    </location>
</feature>
<feature type="strand" evidence="49">
    <location>
        <begin position="122"/>
        <end position="127"/>
    </location>
</feature>
<feature type="helix" evidence="49">
    <location>
        <begin position="134"/>
        <end position="141"/>
    </location>
</feature>
<feature type="helix" evidence="48">
    <location>
        <begin position="142"/>
        <end position="144"/>
    </location>
</feature>
<feature type="strand" evidence="49">
    <location>
        <begin position="147"/>
        <end position="152"/>
    </location>
</feature>
<feature type="strand" evidence="49">
    <location>
        <begin position="158"/>
        <end position="164"/>
    </location>
</feature>
<feature type="helix" evidence="49">
    <location>
        <begin position="165"/>
        <end position="174"/>
    </location>
</feature>
<feature type="turn" evidence="49">
    <location>
        <begin position="175"/>
        <end position="177"/>
    </location>
</feature>
<feature type="strand" evidence="49">
    <location>
        <begin position="179"/>
        <end position="181"/>
    </location>
</feature>
<feature type="strand" evidence="45">
    <location>
        <begin position="183"/>
        <end position="185"/>
    </location>
</feature>
<feature type="strand" evidence="49">
    <location>
        <begin position="187"/>
        <end position="189"/>
    </location>
</feature>
<feature type="strand" evidence="49">
    <location>
        <begin position="191"/>
        <end position="197"/>
    </location>
</feature>
<feature type="strand" evidence="49">
    <location>
        <begin position="202"/>
        <end position="204"/>
    </location>
</feature>
<feature type="strand" evidence="47">
    <location>
        <begin position="206"/>
        <end position="208"/>
    </location>
</feature>
<evidence type="ECO:0000250" key="1">
    <source>
        <dbReference type="UniProtKB" id="Q6PDM2"/>
    </source>
</evidence>
<evidence type="ECO:0000255" key="2">
    <source>
        <dbReference type="PROSITE-ProRule" id="PRU00176"/>
    </source>
</evidence>
<evidence type="ECO:0000256" key="3">
    <source>
        <dbReference type="SAM" id="MobiDB-lite"/>
    </source>
</evidence>
<evidence type="ECO:0000269" key="4">
    <source>
    </source>
</evidence>
<evidence type="ECO:0000269" key="5">
    <source>
    </source>
</evidence>
<evidence type="ECO:0000269" key="6">
    <source>
    </source>
</evidence>
<evidence type="ECO:0000269" key="7">
    <source>
    </source>
</evidence>
<evidence type="ECO:0000269" key="8">
    <source>
    </source>
</evidence>
<evidence type="ECO:0000269" key="9">
    <source>
    </source>
</evidence>
<evidence type="ECO:0000269" key="10">
    <source>
    </source>
</evidence>
<evidence type="ECO:0000269" key="11">
    <source>
    </source>
</evidence>
<evidence type="ECO:0000269" key="12">
    <source>
    </source>
</evidence>
<evidence type="ECO:0000269" key="13">
    <source>
    </source>
</evidence>
<evidence type="ECO:0000269" key="14">
    <source>
    </source>
</evidence>
<evidence type="ECO:0000269" key="15">
    <source>
    </source>
</evidence>
<evidence type="ECO:0000269" key="16">
    <source>
    </source>
</evidence>
<evidence type="ECO:0000269" key="17">
    <source>
    </source>
</evidence>
<evidence type="ECO:0000269" key="18">
    <source>
    </source>
</evidence>
<evidence type="ECO:0000269" key="19">
    <source>
    </source>
</evidence>
<evidence type="ECO:0000269" key="20">
    <source>
    </source>
</evidence>
<evidence type="ECO:0000269" key="21">
    <source>
    </source>
</evidence>
<evidence type="ECO:0000269" key="22">
    <source>
    </source>
</evidence>
<evidence type="ECO:0000269" key="23">
    <source>
    </source>
</evidence>
<evidence type="ECO:0000269" key="24">
    <source>
    </source>
</evidence>
<evidence type="ECO:0000269" key="25">
    <source>
    </source>
</evidence>
<evidence type="ECO:0000269" key="26">
    <source>
    </source>
</evidence>
<evidence type="ECO:0000269" key="27">
    <source>
    </source>
</evidence>
<evidence type="ECO:0000269" key="28">
    <source>
    </source>
</evidence>
<evidence type="ECO:0000269" key="29">
    <source>
    </source>
</evidence>
<evidence type="ECO:0000303" key="30">
    <source>
    </source>
</evidence>
<evidence type="ECO:0000303" key="31">
    <source>
    </source>
</evidence>
<evidence type="ECO:0000305" key="32"/>
<evidence type="ECO:0000312" key="33">
    <source>
        <dbReference type="HGNC" id="HGNC:10780"/>
    </source>
</evidence>
<evidence type="ECO:0007744" key="34">
    <source>
        <dbReference type="PDB" id="4C0O"/>
    </source>
</evidence>
<evidence type="ECO:0007744" key="35">
    <source>
    </source>
</evidence>
<evidence type="ECO:0007744" key="36">
    <source>
    </source>
</evidence>
<evidence type="ECO:0007744" key="37">
    <source>
    </source>
</evidence>
<evidence type="ECO:0007744" key="38">
    <source>
    </source>
</evidence>
<evidence type="ECO:0007744" key="39">
    <source>
    </source>
</evidence>
<evidence type="ECO:0007744" key="40">
    <source>
    </source>
</evidence>
<evidence type="ECO:0007744" key="41">
    <source>
    </source>
</evidence>
<evidence type="ECO:0007744" key="42">
    <source>
    </source>
</evidence>
<evidence type="ECO:0007744" key="43">
    <source>
    </source>
</evidence>
<evidence type="ECO:0007829" key="44">
    <source>
        <dbReference type="PDB" id="1X4A"/>
    </source>
</evidence>
<evidence type="ECO:0007829" key="45">
    <source>
        <dbReference type="PDB" id="2M7S"/>
    </source>
</evidence>
<evidence type="ECO:0007829" key="46">
    <source>
        <dbReference type="PDB" id="2M8D"/>
    </source>
</evidence>
<evidence type="ECO:0007829" key="47">
    <source>
        <dbReference type="PDB" id="2O3D"/>
    </source>
</evidence>
<evidence type="ECO:0007829" key="48">
    <source>
        <dbReference type="PDB" id="3BEG"/>
    </source>
</evidence>
<evidence type="ECO:0007829" key="49">
    <source>
        <dbReference type="PDB" id="4C0O"/>
    </source>
</evidence>
<evidence type="ECO:0007829" key="50">
    <source>
        <dbReference type="PDB" id="6HPJ"/>
    </source>
</evidence>
<protein>
    <recommendedName>
        <fullName evidence="32">Serine/arginine-rich splicing factor 1</fullName>
    </recommendedName>
    <alternativeName>
        <fullName>Alternative-splicing factor 1</fullName>
        <shortName>ASF-1</shortName>
    </alternativeName>
    <alternativeName>
        <fullName>Splicing factor, arginine/serine-rich 1</fullName>
    </alternativeName>
    <alternativeName>
        <fullName>pre-mRNA-splicing factor SF2, P33 subunit</fullName>
    </alternativeName>
</protein>
<reference key="1">
    <citation type="journal article" date="1991" name="Cell">
        <title>Primary structure of the human splicing factor ASF reveals similarities with Drosophila regulators.</title>
        <authorList>
            <person name="Ge H."/>
            <person name="Zuo P."/>
            <person name="Manley J.L."/>
        </authorList>
    </citation>
    <scope>NUCLEOTIDE SEQUENCE [MRNA] (ISOFORMS ASF-1 AND ASF-2)</scope>
    <scope>PARTIAL PROTEIN SEQUENCE</scope>
    <scope>ALTERNATIVE SPLICING</scope>
</reference>
<reference key="2">
    <citation type="journal article" date="1991" name="Cell">
        <title>Functional expression of cloned human splicing factor SF2: homology to RNA-binding proteins, U1 70K, and Drosophila splicing regulators.</title>
        <authorList>
            <person name="Krainer A.R."/>
            <person name="Mayeda A."/>
            <person name="Kozak D."/>
            <person name="Binns G."/>
        </authorList>
    </citation>
    <scope>NUCLEOTIDE SEQUENCE [MRNA] (ISOFORM ASF-1)</scope>
    <scope>PROTEIN SEQUENCE OF 144-161 AND 167-175</scope>
</reference>
<reference key="3">
    <citation type="submission" date="2001-05" db="EMBL/GenBank/DDBJ databases">
        <title>Identification of immuno-peptidmics that are recognized by tumor-reactive CTL generated from TIL of colon cancer patients.</title>
        <authorList>
            <person name="Shichijo S."/>
            <person name="Itoh K."/>
        </authorList>
    </citation>
    <scope>NUCLEOTIDE SEQUENCE [LARGE SCALE MRNA] (ISOFORM ASF-1)</scope>
    <source>
        <tissue>Colon adenocarcinoma</tissue>
    </source>
</reference>
<reference key="4">
    <citation type="journal article" date="2004" name="Nat. Genet.">
        <title>Complete sequencing and characterization of 21,243 full-length human cDNAs.</title>
        <authorList>
            <person name="Ota T."/>
            <person name="Suzuki Y."/>
            <person name="Nishikawa T."/>
            <person name="Otsuki T."/>
            <person name="Sugiyama T."/>
            <person name="Irie R."/>
            <person name="Wakamatsu A."/>
            <person name="Hayashi K."/>
            <person name="Sato H."/>
            <person name="Nagai K."/>
            <person name="Kimura K."/>
            <person name="Makita H."/>
            <person name="Sekine M."/>
            <person name="Obayashi M."/>
            <person name="Nishi T."/>
            <person name="Shibahara T."/>
            <person name="Tanaka T."/>
            <person name="Ishii S."/>
            <person name="Yamamoto J."/>
            <person name="Saito K."/>
            <person name="Kawai Y."/>
            <person name="Isono Y."/>
            <person name="Nakamura Y."/>
            <person name="Nagahari K."/>
            <person name="Murakami K."/>
            <person name="Yasuda T."/>
            <person name="Iwayanagi T."/>
            <person name="Wagatsuma M."/>
            <person name="Shiratori A."/>
            <person name="Sudo H."/>
            <person name="Hosoiri T."/>
            <person name="Kaku Y."/>
            <person name="Kodaira H."/>
            <person name="Kondo H."/>
            <person name="Sugawara M."/>
            <person name="Takahashi M."/>
            <person name="Kanda K."/>
            <person name="Yokoi T."/>
            <person name="Furuya T."/>
            <person name="Kikkawa E."/>
            <person name="Omura Y."/>
            <person name="Abe K."/>
            <person name="Kamihara K."/>
            <person name="Katsuta N."/>
            <person name="Sato K."/>
            <person name="Tanikawa M."/>
            <person name="Yamazaki M."/>
            <person name="Ninomiya K."/>
            <person name="Ishibashi T."/>
            <person name="Yamashita H."/>
            <person name="Murakawa K."/>
            <person name="Fujimori K."/>
            <person name="Tanai H."/>
            <person name="Kimata M."/>
            <person name="Watanabe M."/>
            <person name="Hiraoka S."/>
            <person name="Chiba Y."/>
            <person name="Ishida S."/>
            <person name="Ono Y."/>
            <person name="Takiguchi S."/>
            <person name="Watanabe S."/>
            <person name="Yosida M."/>
            <person name="Hotuta T."/>
            <person name="Kusano J."/>
            <person name="Kanehori K."/>
            <person name="Takahashi-Fujii A."/>
            <person name="Hara H."/>
            <person name="Tanase T.-O."/>
            <person name="Nomura Y."/>
            <person name="Togiya S."/>
            <person name="Komai F."/>
            <person name="Hara R."/>
            <person name="Takeuchi K."/>
            <person name="Arita M."/>
            <person name="Imose N."/>
            <person name="Musashino K."/>
            <person name="Yuuki H."/>
            <person name="Oshima A."/>
            <person name="Sasaki N."/>
            <person name="Aotsuka S."/>
            <person name="Yoshikawa Y."/>
            <person name="Matsunawa H."/>
            <person name="Ichihara T."/>
            <person name="Shiohata N."/>
            <person name="Sano S."/>
            <person name="Moriya S."/>
            <person name="Momiyama H."/>
            <person name="Satoh N."/>
            <person name="Takami S."/>
            <person name="Terashima Y."/>
            <person name="Suzuki O."/>
            <person name="Nakagawa S."/>
            <person name="Senoh A."/>
            <person name="Mizoguchi H."/>
            <person name="Goto Y."/>
            <person name="Shimizu F."/>
            <person name="Wakebe H."/>
            <person name="Hishigaki H."/>
            <person name="Watanabe T."/>
            <person name="Sugiyama A."/>
            <person name="Takemoto M."/>
            <person name="Kawakami B."/>
            <person name="Yamazaki M."/>
            <person name="Watanabe K."/>
            <person name="Kumagai A."/>
            <person name="Itakura S."/>
            <person name="Fukuzumi Y."/>
            <person name="Fujimori Y."/>
            <person name="Komiyama M."/>
            <person name="Tashiro H."/>
            <person name="Tanigami A."/>
            <person name="Fujiwara T."/>
            <person name="Ono T."/>
            <person name="Yamada K."/>
            <person name="Fujii Y."/>
            <person name="Ozaki K."/>
            <person name="Hirao M."/>
            <person name="Ohmori Y."/>
            <person name="Kawabata A."/>
            <person name="Hikiji T."/>
            <person name="Kobatake N."/>
            <person name="Inagaki H."/>
            <person name="Ikema Y."/>
            <person name="Okamoto S."/>
            <person name="Okitani R."/>
            <person name="Kawakami T."/>
            <person name="Noguchi S."/>
            <person name="Itoh T."/>
            <person name="Shigeta K."/>
            <person name="Senba T."/>
            <person name="Matsumura K."/>
            <person name="Nakajima Y."/>
            <person name="Mizuno T."/>
            <person name="Morinaga M."/>
            <person name="Sasaki M."/>
            <person name="Togashi T."/>
            <person name="Oyama M."/>
            <person name="Hata H."/>
            <person name="Watanabe M."/>
            <person name="Komatsu T."/>
            <person name="Mizushima-Sugano J."/>
            <person name="Satoh T."/>
            <person name="Shirai Y."/>
            <person name="Takahashi Y."/>
            <person name="Nakagawa K."/>
            <person name="Okumura K."/>
            <person name="Nagase T."/>
            <person name="Nomura N."/>
            <person name="Kikuchi H."/>
            <person name="Masuho Y."/>
            <person name="Yamashita R."/>
            <person name="Nakai K."/>
            <person name="Yada T."/>
            <person name="Nakamura Y."/>
            <person name="Ohara O."/>
            <person name="Isogai T."/>
            <person name="Sugano S."/>
        </authorList>
    </citation>
    <scope>NUCLEOTIDE SEQUENCE [LARGE SCALE MRNA] (ISOFORM ASF-1)</scope>
    <source>
        <tissue>Testis</tissue>
    </source>
</reference>
<reference key="5">
    <citation type="submission" date="2005-09" db="EMBL/GenBank/DDBJ databases">
        <authorList>
            <person name="Mural R.J."/>
            <person name="Istrail S."/>
            <person name="Sutton G.G."/>
            <person name="Florea L."/>
            <person name="Halpern A.L."/>
            <person name="Mobarry C.M."/>
            <person name="Lippert R."/>
            <person name="Walenz B."/>
            <person name="Shatkay H."/>
            <person name="Dew I."/>
            <person name="Miller J.R."/>
            <person name="Flanigan M.J."/>
            <person name="Edwards N.J."/>
            <person name="Bolanos R."/>
            <person name="Fasulo D."/>
            <person name="Halldorsson B.V."/>
            <person name="Hannenhalli S."/>
            <person name="Turner R."/>
            <person name="Yooseph S."/>
            <person name="Lu F."/>
            <person name="Nusskern D.R."/>
            <person name="Shue B.C."/>
            <person name="Zheng X.H."/>
            <person name="Zhong F."/>
            <person name="Delcher A.L."/>
            <person name="Huson D.H."/>
            <person name="Kravitz S.A."/>
            <person name="Mouchard L."/>
            <person name="Reinert K."/>
            <person name="Remington K.A."/>
            <person name="Clark A.G."/>
            <person name="Waterman M.S."/>
            <person name="Eichler E.E."/>
            <person name="Adams M.D."/>
            <person name="Hunkapiller M.W."/>
            <person name="Myers E.W."/>
            <person name="Venter J.C."/>
        </authorList>
    </citation>
    <scope>NUCLEOTIDE SEQUENCE [LARGE SCALE GENOMIC DNA]</scope>
</reference>
<reference key="6">
    <citation type="journal article" date="2004" name="Genome Res.">
        <title>The status, quality, and expansion of the NIH full-length cDNA project: the Mammalian Gene Collection (MGC).</title>
        <authorList>
            <consortium name="The MGC Project Team"/>
        </authorList>
    </citation>
    <scope>NUCLEOTIDE SEQUENCE [LARGE SCALE MRNA] (ISOFORMS ASF-1 AND ASF-3)</scope>
    <source>
        <tissue>Brain</tissue>
        <tissue>Placenta</tissue>
    </source>
</reference>
<reference key="7">
    <citation type="submission" date="2008-12" db="UniProtKB">
        <authorList>
            <person name="Lubec G."/>
            <person name="Chen W.-Q."/>
            <person name="Sun Y."/>
        </authorList>
    </citation>
    <scope>PROTEIN SEQUENCE OF 18-28; 31-38; 52-65; 75-83; 123-138 AND 143-164</scope>
    <scope>IDENTIFICATION BY MASS SPECTROMETRY</scope>
    <source>
        <tissue>Fetal brain cortex</tissue>
    </source>
</reference>
<reference key="8">
    <citation type="journal article" date="1992" name="Genes Dev.">
        <title>SR proteins: a conserved family of pre-mRNA splicing factors.</title>
        <authorList>
            <person name="Zahler A.M."/>
            <person name="Lane W.S."/>
            <person name="Stolk J.A."/>
            <person name="Roth M.B."/>
        </authorList>
    </citation>
    <scope>PROTEIN SEQUENCE OF 123-140</scope>
</reference>
<reference key="9">
    <citation type="journal article" date="1992" name="Proc. Natl. Acad. Sci. U.S.A.">
        <title>Two members of a conserved family of nuclear phosphoproteins are involved in pre-mRNA splicing.</title>
        <authorList>
            <person name="Mayeda A."/>
            <person name="Zahler A.M."/>
            <person name="Krainer A.R."/>
            <person name="Roth M.B."/>
        </authorList>
    </citation>
    <scope>CHARACTERIZATION</scope>
</reference>
<reference key="10">
    <citation type="journal article" date="1993" name="Cell">
        <title>Specific interactions between proteins implicated in splice site selection and regulated alternative splicing.</title>
        <authorList>
            <person name="Wu J.Y."/>
            <person name="Maniatis T."/>
        </authorList>
    </citation>
    <scope>INTERACTION IN SPLICEOSOME ASSEMBLY</scope>
</reference>
<reference key="11">
    <citation type="journal article" date="1993" name="EMBO J.">
        <title>Functional domains of the human splicing factor ASF/SF2.</title>
        <authorList>
            <person name="Zuo P."/>
            <person name="Manley J.L."/>
        </authorList>
    </citation>
    <scope>MUTAGENESIS</scope>
    <scope>CHARACTERIZATION OF FUNCTIONAL DOMAINS</scope>
</reference>
<reference key="12">
    <citation type="journal article" date="1994" name="Nature">
        <title>Protein-protein interactions and 5'-splice-site recognition in mammalian mRNA precursors.</title>
        <authorList>
            <person name="Kohtz J.D."/>
            <person name="Jamison S.F."/>
            <person name="Will C.L."/>
            <person name="Zuo P."/>
            <person name="Luehrmann R."/>
            <person name="Garcia-Blanco M.A."/>
            <person name="Manley J.L."/>
        </authorList>
    </citation>
    <scope>FUNCTION IN RECRUITMENT OF U1-70K TO PRE-MRNA</scope>
</reference>
<reference key="13">
    <citation type="journal article" date="1994" name="Proc. Natl. Acad. Sci. U.S.A.">
        <title>The human splicing factor ASF/SF2 can specifically recognize pre-mRNA 5' splice sites.</title>
        <authorList>
            <person name="Zuo P."/>
            <person name="Manley J.L."/>
        </authorList>
    </citation>
    <scope>RECOGNITION OF PRE-MRNA 5'SPLICE SITES</scope>
</reference>
<reference key="14">
    <citation type="journal article" date="1995" name="EMBO J.">
        <title>The human splicing factors ASF/SF2 and SC35 possess distinct, functionally significant RNA binding specificities.</title>
        <authorList>
            <person name="Tacke R."/>
            <person name="Manley J.L."/>
        </authorList>
    </citation>
    <scope>RNA-BINDING SPECIFICITY</scope>
</reference>
<reference key="15">
    <citation type="journal article" date="1997" name="Nature">
        <title>A protein related to splicing factor U2AF35 that interacts with U2AF65 and SR proteins in splicing of pre-mRNA.</title>
        <authorList>
            <person name="Tronchere H."/>
            <person name="Wang J."/>
            <person name="Fu X.D."/>
        </authorList>
    </citation>
    <scope>INTERACTION WITH ZRSR2</scope>
</reference>
<reference key="16">
    <citation type="journal article" date="1998" name="Genes Dev.">
        <title>A specific subset of SR proteins shuttles continuously between the nucleus and the cytoplasm.</title>
        <authorList>
            <person name="Caceres J.F."/>
            <person name="Screaton G.R."/>
            <person name="Krainer A.R."/>
        </authorList>
    </citation>
    <scope>SUBCELLULAR LOCATION</scope>
    <scope>MUTAGENESIS OF PHE-162 AND PHE-180</scope>
</reference>
<reference key="17">
    <citation type="journal article" date="1998" name="Mol. Cell">
        <title>A novel transcriptional coactivator, p52, functionally interacts with the essential splicing factor ASF/SF2.</title>
        <authorList>
            <person name="Ge H."/>
            <person name="Si Y."/>
            <person name="Wolffe A.P."/>
        </authorList>
    </citation>
    <scope>INTERACTION WITH PSIP1</scope>
</reference>
<reference key="18">
    <citation type="journal article" date="1998" name="Nucleic Acids Res.">
        <title>SAF-B couples transcription and pre-mRNA splicing to SAR/MAR elements.</title>
        <authorList>
            <person name="Nayler O."/>
            <person name="Straetling W."/>
            <person name="Bourquin J.-P."/>
            <person name="Stagljar I."/>
            <person name="Lindemann L."/>
            <person name="Jasper H."/>
            <person name="Hartmann A.M."/>
            <person name="Fackelmeyer F.O."/>
            <person name="Ullrich A."/>
            <person name="Stamm S."/>
        </authorList>
    </citation>
    <scope>INTERACTION WITH SAFB/SAFB1</scope>
</reference>
<reference key="19">
    <citation type="journal article" date="2000" name="Mol. Cell. Biol.">
        <title>Identification and characterization of a novel serine-arginine-rich splicing regulatory protein.</title>
        <authorList>
            <person name="Barnard D.C."/>
            <person name="Patton J.G."/>
        </authorList>
    </citation>
    <scope>INTERACTION WITH SREK1</scope>
</reference>
<reference key="20">
    <citation type="journal article" date="2002" name="Mol. Cell. Biol.">
        <title>Nuclear export and retention signals in the RS domain of SR proteins.</title>
        <authorList>
            <person name="Cazalla D."/>
            <person name="Zhu J."/>
            <person name="Manche L."/>
            <person name="Huber E."/>
            <person name="Krainer A.R."/>
            <person name="Caceres J.F."/>
        </authorList>
    </citation>
    <scope>SUBCELLULAR LOCATION</scope>
</reference>
<reference key="21">
    <citation type="journal article" date="2002" name="RNA">
        <title>Purification and characterization of native spliceosomes suitable for three-dimensional structural analysis.</title>
        <authorList>
            <person name="Jurica M.S."/>
            <person name="Licklider L.J."/>
            <person name="Gygi S.P."/>
            <person name="Grigorieff N."/>
            <person name="Moore M.J."/>
        </authorList>
    </citation>
    <scope>IDENTIFICATION BY MASS SPECTROMETRY</scope>
    <scope>IDENTIFICATION IN THE SPLICEOSOMAL C COMPLEX</scope>
</reference>
<reference key="22">
    <citation type="journal article" date="2003" name="Mol. Cell">
        <title>SR splicing factors serve as adapter proteins for TAP-dependent mRNA export.</title>
        <authorList>
            <person name="Huang Y."/>
            <person name="Gattoni R."/>
            <person name="Stevenin J."/>
            <person name="Steitz J.A."/>
        </authorList>
    </citation>
    <scope>INTERACTION WITH NXF1</scope>
</reference>
<reference key="23">
    <citation type="journal article" date="2003" name="Proc. Natl. Acad. Sci. U.S.A.">
        <title>Processive phosphorylation of alternative splicing factor/splicing factor 2.</title>
        <authorList>
            <person name="Aubol B.E."/>
            <person name="Chakrabarti S."/>
            <person name="Ngo J."/>
            <person name="Shaffer J."/>
            <person name="Nolen B."/>
            <person name="Fu X.-D."/>
            <person name="Ghosh G."/>
            <person name="Adams J.A."/>
        </authorList>
    </citation>
    <scope>PHOSPHORYLATION AT SERINE RESIDUES</scope>
    <scope>INTERACTION WITH SRPK1</scope>
</reference>
<reference key="24">
    <citation type="journal article" date="2005" name="Mol. Cell. Biol.">
        <title>A novel SR-related protein is required for the second step of pre-mRNA splicing.</title>
        <authorList>
            <person name="Cazalla D."/>
            <person name="Newton K."/>
            <person name="Caceres J.F."/>
        </authorList>
    </citation>
    <scope>INTERACTION WITH RSRC1</scope>
</reference>
<reference key="25">
    <citation type="journal article" date="2006" name="Cell">
        <title>Global, in vivo, and site-specific phosphorylation dynamics in signaling networks.</title>
        <authorList>
            <person name="Olsen J.V."/>
            <person name="Blagoev B."/>
            <person name="Gnad F."/>
            <person name="Macek B."/>
            <person name="Kumar C."/>
            <person name="Mortensen P."/>
            <person name="Mann M."/>
        </authorList>
    </citation>
    <scope>IDENTIFICATION BY MASS SPECTROMETRY [LARGE SCALE ANALYSIS]</scope>
    <source>
        <tissue>Cervix carcinoma</tissue>
    </source>
</reference>
<reference key="26">
    <citation type="journal article" date="2008" name="J. Biol. Chem.">
        <title>Characterization of cyclin L1 and L2 interactions with CDK11 and splicing factors: influence of cyclin L isoforms on splice site selection.</title>
        <authorList>
            <person name="Loyer P."/>
            <person name="Trembley J.H."/>
            <person name="Grenet J.A."/>
            <person name="Busson A."/>
            <person name="Corlu A."/>
            <person name="Zhao W."/>
            <person name="Kocak M."/>
            <person name="Kidd V.J."/>
            <person name="Lahti J.M."/>
        </authorList>
    </citation>
    <scope>INTERACTION WITH CCNL1; CCNL2 AND CDK11B</scope>
</reference>
<reference key="27">
    <citation type="journal article" date="2008" name="J. Mol. Biol.">
        <title>Ordered multi-site phosphorylation of the splicing factor ASF/SF2 by SRPK1.</title>
        <authorList>
            <person name="Ma C.T."/>
            <person name="Velazquez-Dones A."/>
            <person name="Hagopian J.C."/>
            <person name="Ghosh G."/>
            <person name="Fu X.D."/>
            <person name="Adams J.A."/>
        </authorList>
    </citation>
    <scope>PHOSPHORYLATION BY SRPK1</scope>
    <scope>THE MECHANISM OF PHOSPHORYLATION</scope>
</reference>
<reference key="28">
    <citation type="journal article" date="2008" name="J. Mol. Biol.">
        <title>Adaptable molecular interactions guide phosphorylation of the SR protein ASF/SF2 by SRPK1.</title>
        <authorList>
            <person name="Hagopian J.C."/>
            <person name="Ma C.T."/>
            <person name="Meade B.R."/>
            <person name="Albuquerque C.P."/>
            <person name="Ngo J.C."/>
            <person name="Ghosh G."/>
            <person name="Jennings P.A."/>
            <person name="Fu X.D."/>
            <person name="Adams J.A."/>
        </authorList>
    </citation>
    <scope>PHOSPHORYLATION BY SRPK1</scope>
    <scope>THE MECHANISM OF PHOSPHORYLATION</scope>
</reference>
<reference key="29">
    <citation type="journal article" date="2008" name="Proc. Natl. Acad. Sci. U.S.A.">
        <title>A quantitative atlas of mitotic phosphorylation.</title>
        <authorList>
            <person name="Dephoure N."/>
            <person name="Zhou C."/>
            <person name="Villen J."/>
            <person name="Beausoleil S.A."/>
            <person name="Bakalarski C.E."/>
            <person name="Elledge S.J."/>
            <person name="Gygi S.P."/>
        </authorList>
    </citation>
    <scope>PHOSPHORYLATION [LARGE SCALE ANALYSIS] AT SER-199; SER-205; SER-231; SER-234 AND SER-238</scope>
    <scope>IDENTIFICATION BY MASS SPECTROMETRY [LARGE SCALE ANALYSIS]</scope>
    <source>
        <tissue>Cervix carcinoma</tissue>
    </source>
</reference>
<reference key="30">
    <citation type="journal article" date="2009" name="Biochemistry">
        <title>Allosteric interactions direct binding and phosphorylation of ASF/SF2 by SRPK1.</title>
        <authorList>
            <person name="Huynh N."/>
            <person name="Ma C.T."/>
            <person name="Giang N."/>
            <person name="Hagopian J."/>
            <person name="Ngo J."/>
            <person name="Adams J."/>
            <person name="Ghosh G."/>
        </authorList>
    </citation>
    <scope>PHOSPHORYLATION BY SRPK1</scope>
    <scope>THE MECHANISM OF PHOSPHORYLATION</scope>
</reference>
<reference key="31">
    <citation type="journal article" date="2009" name="J. Mol. Biol.">
        <title>Regiospecific phosphorylation control of the SR protein ASF/SF2 by SRPK1.</title>
        <authorList>
            <person name="Ma C.T."/>
            <person name="Hagopian J.C."/>
            <person name="Ghosh G."/>
            <person name="Fu X.D."/>
            <person name="Adams J.A."/>
        </authorList>
    </citation>
    <scope>PHOSPHORYLATION BY SRPK1</scope>
    <scope>THE MECHANISM OF PHOSPHORYLATION</scope>
</reference>
<reference key="32">
    <citation type="journal article" date="2009" name="Nat. Biotechnol.">
        <title>Rapid and systematic analysis of the RNA recognition specificities of RNA-binding proteins.</title>
        <authorList>
            <person name="Ray D."/>
            <person name="Kazan H."/>
            <person name="Chan E.T."/>
            <person name="Pena Castillo L."/>
            <person name="Chaudhry S."/>
            <person name="Talukder S."/>
            <person name="Blencowe B.J."/>
            <person name="Morris Q."/>
            <person name="Hughes T.R."/>
        </authorList>
    </citation>
    <scope>RNA-BINDING</scope>
</reference>
<reference key="33">
    <citation type="journal article" date="2009" name="Science">
        <title>Lysine acetylation targets protein complexes and co-regulates major cellular functions.</title>
        <authorList>
            <person name="Choudhary C."/>
            <person name="Kumar C."/>
            <person name="Gnad F."/>
            <person name="Nielsen M.L."/>
            <person name="Rehman M."/>
            <person name="Walther T.C."/>
            <person name="Olsen J.V."/>
            <person name="Mann M."/>
        </authorList>
    </citation>
    <scope>ACETYLATION [LARGE SCALE ANALYSIS] AT LYS-38 AND LYS-179</scope>
    <scope>IDENTIFICATION BY MASS SPECTROMETRY [LARGE SCALE ANALYSIS]</scope>
</reference>
<reference key="34">
    <citation type="journal article" date="2010" name="Mol. Cell. Biol.">
        <title>Arginine methylation controls the subcellular localization and functions of the oncoprotein splicing factor SF2/ASF.</title>
        <authorList>
            <person name="Sinha R."/>
            <person name="Allemand E."/>
            <person name="Zhang Z."/>
            <person name="Karni R."/>
            <person name="Myers M.P."/>
            <person name="Krainer A.R."/>
        </authorList>
    </citation>
    <scope>METHYLATION AT ARG-93; ARG-97 AND ARG-109</scope>
    <scope>MUTAGENESIS OF ARG-93; ARG-97 AND ARG-109</scope>
    <scope>SUBCELLULAR LOCATION</scope>
</reference>
<reference key="35">
    <citation type="journal article" date="2010" name="Sci. Signal.">
        <title>Quantitative phosphoproteomics reveals widespread full phosphorylation site occupancy during mitosis.</title>
        <authorList>
            <person name="Olsen J.V."/>
            <person name="Vermeulen M."/>
            <person name="Santamaria A."/>
            <person name="Kumar C."/>
            <person name="Miller M.L."/>
            <person name="Jensen L.J."/>
            <person name="Gnad F."/>
            <person name="Cox J."/>
            <person name="Jensen T.S."/>
            <person name="Nigg E.A."/>
            <person name="Brunak S."/>
            <person name="Mann M."/>
        </authorList>
    </citation>
    <scope>PHOSPHORYLATION [LARGE SCALE ANALYSIS] AT SER-199</scope>
    <scope>IDENTIFICATION BY MASS SPECTROMETRY [LARGE SCALE ANALYSIS]</scope>
    <source>
        <tissue>Cervix carcinoma</tissue>
    </source>
</reference>
<reference key="36">
    <citation type="journal article" date="2011" name="BMC Syst. Biol.">
        <title>Initial characterization of the human central proteome.</title>
        <authorList>
            <person name="Burkard T.R."/>
            <person name="Planyavsky M."/>
            <person name="Kaupe I."/>
            <person name="Breitwieser F.P."/>
            <person name="Buerckstuemmer T."/>
            <person name="Bennett K.L."/>
            <person name="Superti-Furga G."/>
            <person name="Colinge J."/>
        </authorList>
    </citation>
    <scope>IDENTIFICATION BY MASS SPECTROMETRY [LARGE SCALE ANALYSIS]</scope>
</reference>
<reference key="37">
    <citation type="journal article" date="2011" name="Nucleic Acids Res.">
        <title>NSrp70 is a novel nuclear speckle-related protein that modulates alternative pre-mRNA splicing in vivo.</title>
        <authorList>
            <person name="Kim Y.D."/>
            <person name="Lee J.Y."/>
            <person name="Oh K.M."/>
            <person name="Araki M."/>
            <person name="Araki K."/>
            <person name="Yamamura K.I."/>
            <person name="Jun C.D."/>
        </authorList>
    </citation>
    <scope>INTERACTION WITH CCDC55</scope>
</reference>
<reference key="38">
    <citation type="journal article" date="2011" name="Sci. Signal.">
        <title>System-wide temporal characterization of the proteome and phosphoproteome of human embryonic stem cell differentiation.</title>
        <authorList>
            <person name="Rigbolt K.T."/>
            <person name="Prokhorova T.A."/>
            <person name="Akimov V."/>
            <person name="Henningsen J."/>
            <person name="Johansen P.T."/>
            <person name="Kratchmarova I."/>
            <person name="Kassem M."/>
            <person name="Mann M."/>
            <person name="Olsen J.V."/>
            <person name="Blagoev B."/>
        </authorList>
    </citation>
    <scope>ACETYLATION [LARGE SCALE ANALYSIS] AT SER-2</scope>
    <scope>PHOSPHORYLATION [LARGE SCALE ANALYSIS] AT SER-2 AND SER-199</scope>
    <scope>CLEAVAGE OF INITIATOR METHIONINE [LARGE SCALE ANALYSIS]</scope>
    <scope>IDENTIFICATION BY MASS SPECTROMETRY [LARGE SCALE ANALYSIS]</scope>
</reference>
<reference key="39">
    <citation type="journal article" date="2013" name="J. Proteome Res.">
        <title>Toward a comprehensive characterization of a human cancer cell phosphoproteome.</title>
        <authorList>
            <person name="Zhou H."/>
            <person name="Di Palma S."/>
            <person name="Preisinger C."/>
            <person name="Peng M."/>
            <person name="Polat A.N."/>
            <person name="Heck A.J."/>
            <person name="Mohammed S."/>
        </authorList>
    </citation>
    <scope>PHOSPHORYLATION [LARGE SCALE ANALYSIS] AT SER-2; SER-133; SER-199; SER-201 AND SER-205</scope>
    <scope>IDENTIFICATION BY MASS SPECTROMETRY [LARGE SCALE ANALYSIS]</scope>
    <source>
        <tissue>Cervix carcinoma</tissue>
        <tissue>Erythroleukemia</tissue>
    </source>
</reference>
<reference key="40">
    <citation type="journal article" date="2014" name="J. Biol. Chem.">
        <title>Nuclear ARVCF protein binds splicing factors and contributes to the regulation of alternative splicing.</title>
        <authorList>
            <person name="Rappe U."/>
            <person name="Schlechter T."/>
            <person name="Aschoff M."/>
            <person name="Hotz-Wagenblatt A."/>
            <person name="Hofmann I."/>
        </authorList>
    </citation>
    <scope>IDENTIFICATION IN RIBONUCLEOPROTEIN COMPLEX</scope>
    <scope>INTERACTION WITH ARVCF</scope>
    <scope>SUBCELLULAR LOCATION</scope>
</reference>
<reference key="41">
    <citation type="journal article" date="2014" name="J. Proteomics">
        <title>An enzyme assisted RP-RPLC approach for in-depth analysis of human liver phosphoproteome.</title>
        <authorList>
            <person name="Bian Y."/>
            <person name="Song C."/>
            <person name="Cheng K."/>
            <person name="Dong M."/>
            <person name="Wang F."/>
            <person name="Huang J."/>
            <person name="Sun D."/>
            <person name="Wang L."/>
            <person name="Ye M."/>
            <person name="Zou H."/>
        </authorList>
    </citation>
    <scope>PHOSPHORYLATION [LARGE SCALE ANALYSIS] AT SER-199; SER-201 AND TYR-202</scope>
    <scope>IDENTIFICATION BY MASS SPECTROMETRY [LARGE SCALE ANALYSIS]</scope>
    <source>
        <tissue>Liver</tissue>
    </source>
</reference>
<reference key="42">
    <citation type="journal article" date="2014" name="Mol. Cell. Proteomics">
        <title>Immunoaffinity enrichment and mass spectrometry analysis of protein methylation.</title>
        <authorList>
            <person name="Guo A."/>
            <person name="Gu H."/>
            <person name="Zhou J."/>
            <person name="Mulhern D."/>
            <person name="Wang Y."/>
            <person name="Lee K.A."/>
            <person name="Yang V."/>
            <person name="Aguiar M."/>
            <person name="Kornhauser J."/>
            <person name="Jia X."/>
            <person name="Ren J."/>
            <person name="Beausoleil S.A."/>
            <person name="Silva J.C."/>
            <person name="Vemulapalli V."/>
            <person name="Bedford M.T."/>
            <person name="Comb M.J."/>
        </authorList>
    </citation>
    <scope>METHYLATION [LARGE SCALE ANALYSIS] AT ARG-93; ARG-97; ARG-109 AND ARG-111</scope>
    <scope>IDENTIFICATION BY MASS SPECTROMETRY [LARGE SCALE ANALYSIS]</scope>
    <source>
        <tissue>Colon carcinoma</tissue>
    </source>
</reference>
<reference key="43">
    <citation type="journal article" date="2014" name="Oncogene">
        <title>RRP1B is a metastasis modifier that regulates the expression of alternative mRNA isoforms through interactions with SRSF1.</title>
        <authorList>
            <consortium name="NISC Comparative Sequencing Program"/>
            <person name="Lee M."/>
            <person name="Dworkin A.M."/>
            <person name="Gildea D."/>
            <person name="Trivedi N.S."/>
            <person name="Moorhead G.B."/>
            <person name="Crawford N.P."/>
        </authorList>
    </citation>
    <scope>INTERACTION WITH RRP1B</scope>
</reference>
<reference key="44">
    <citation type="journal article" date="2015" name="Mol. Cell. Proteomics">
        <title>System-wide analysis of SUMOylation dynamics in response to replication stress reveals novel small ubiquitin-like modified target proteins and acceptor lysines relevant for genome stability.</title>
        <authorList>
            <person name="Xiao Z."/>
            <person name="Chang J.G."/>
            <person name="Hendriks I.A."/>
            <person name="Sigurdsson J.O."/>
            <person name="Olsen J.V."/>
            <person name="Vertegaal A.C."/>
        </authorList>
    </citation>
    <scope>SUMOYLATION [LARGE SCALE ANALYSIS] AT LYS-38</scope>
    <scope>IDENTIFICATION BY MASS SPECTROMETRY [LARGE SCALE ANALYSIS]</scope>
</reference>
<reference key="45">
    <citation type="journal article" date="2015" name="Proteomics">
        <title>N-terminome analysis of the human mitochondrial proteome.</title>
        <authorList>
            <person name="Vaca Jacome A.S."/>
            <person name="Rabilloud T."/>
            <person name="Schaeffer-Reiss C."/>
            <person name="Rompais M."/>
            <person name="Ayoub D."/>
            <person name="Lane L."/>
            <person name="Bairoch A."/>
            <person name="Van Dorsselaer A."/>
            <person name="Carapito C."/>
        </authorList>
    </citation>
    <scope>IDENTIFICATION BY MASS SPECTROMETRY [LARGE SCALE ANALYSIS]</scope>
</reference>
<reference key="46">
    <citation type="journal article" date="2017" name="Nat. Struct. Mol. Biol.">
        <title>Site-specific mapping of the human SUMO proteome reveals co-modification with phosphorylation.</title>
        <authorList>
            <person name="Hendriks I.A."/>
            <person name="Lyon D."/>
            <person name="Young C."/>
            <person name="Jensen L.J."/>
            <person name="Vertegaal A.C."/>
            <person name="Nielsen M.L."/>
        </authorList>
    </citation>
    <scope>SUMOYLATION [LARGE SCALE ANALYSIS] AT LYS-30 AND LYS-38</scope>
    <scope>IDENTIFICATION BY MASS SPECTROMETRY [LARGE SCALE ANALYSIS]</scope>
</reference>
<reference key="47">
    <citation type="submission" date="2005-11" db="PDB data bank">
        <title>Solution structure of RRM domain in splicing factor SF2.</title>
        <authorList>
            <consortium name="RIKEN structural genomics initiative (RSGI)"/>
        </authorList>
    </citation>
    <scope>STRUCTURE BY NMR OF 1-98</scope>
</reference>
<reference key="48">
    <citation type="journal article" date="2008" name="Mol. Cell">
        <title>A sliding docking interaction is essential for sequential and processive phosphorylation of an SR protein by SRPK1.</title>
        <authorList>
            <person name="Ngo J.C."/>
            <person name="Giang K."/>
            <person name="Chakrabarti S."/>
            <person name="Ma C.T."/>
            <person name="Huynh N."/>
            <person name="Hagopian J.C."/>
            <person name="Dorrestein P.C."/>
            <person name="Fu X.D."/>
            <person name="Adams J.A."/>
            <person name="Ghosh G."/>
        </authorList>
    </citation>
    <scope>X-RAY CRYSTALLOGRAPHY (2.9 ANGSTROMS) OF 105-219 IN COMPLEX WITH SRPK1</scope>
    <scope>MECHANISM OF ITS PHOSPHORYLATION BY SRPK1</scope>
    <scope>DOMAIN RRM</scope>
</reference>
<reference evidence="34" key="49">
    <citation type="journal article" date="2014" name="Proc. Natl. Acad. Sci. U.S.A.">
        <title>Structural basis for nuclear import of splicing factors by human Transportin 3.</title>
        <authorList>
            <person name="Maertens G.N."/>
            <person name="Cook N.J."/>
            <person name="Wang W."/>
            <person name="Hare S."/>
            <person name="Gupta S.S."/>
            <person name="Oztop I."/>
            <person name="Lee K."/>
            <person name="Pye V.E."/>
            <person name="Cosnefroy O."/>
            <person name="Snijders A.P."/>
            <person name="KewalRamani V.N."/>
            <person name="Fassati A."/>
            <person name="Engelman A."/>
            <person name="Cherepanov P."/>
        </authorList>
    </citation>
    <scope>X-RAY CRYSTALLOGRAPHY (2.56 ANGSTROMS) OF 106-230 IN COMPLEX WITH TNPO3</scope>
    <scope>PHOSPHORYLATION AT SER-201; SER-207 AND SER-209</scope>
    <scope>SUBCELLULAR LOCATION</scope>
</reference>
<reference key="50">
    <citation type="journal article" date="2006" name="Science">
        <title>The consensus coding sequences of human breast and colorectal cancers.</title>
        <authorList>
            <person name="Sjoeblom T."/>
            <person name="Jones S."/>
            <person name="Wood L.D."/>
            <person name="Parsons D.W."/>
            <person name="Lin J."/>
            <person name="Barber T.D."/>
            <person name="Mandelker D."/>
            <person name="Leary R.J."/>
            <person name="Ptak J."/>
            <person name="Silliman N."/>
            <person name="Szabo S."/>
            <person name="Buckhaults P."/>
            <person name="Farrell C."/>
            <person name="Meeh P."/>
            <person name="Markowitz S.D."/>
            <person name="Willis J."/>
            <person name="Dawson D."/>
            <person name="Willson J.K.V."/>
            <person name="Gazdar A.F."/>
            <person name="Hartigan J."/>
            <person name="Wu L."/>
            <person name="Liu C."/>
            <person name="Parmigiani G."/>
            <person name="Park B.H."/>
            <person name="Bachman K.E."/>
            <person name="Papadopoulos N."/>
            <person name="Vogelstein B."/>
            <person name="Kinzler K.W."/>
            <person name="Velculescu V.E."/>
        </authorList>
    </citation>
    <scope>VARIANT [LARGE SCALE ANALYSIS] SER-89</scope>
</reference>
<reference key="51">
    <citation type="journal article" date="2023" name="Am. J. Hum. Genet.">
        <title>SRSF1 haploinsufficiency is responsible for a syndromic developmental disorder associated with intellectual disability.</title>
        <authorList>
            <person name="Bogaert E."/>
            <person name="Garde A."/>
            <person name="Gautier T."/>
            <person name="Rooney K."/>
            <person name="Duffourd Y."/>
            <person name="LeBlanc P."/>
            <person name="van Reempts E."/>
            <person name="Tran Mau-Them F."/>
            <person name="Wentzensen I.M."/>
            <person name="Au K.S."/>
            <person name="Richardson K."/>
            <person name="Northrup H."/>
            <person name="Gatinois V."/>
            <person name="Genevieve D."/>
            <person name="Louie R.J."/>
            <person name="Lyons M.J."/>
            <person name="Laulund L.W."/>
            <person name="Brasch-Andersen C."/>
            <person name="Maxel Juul T."/>
            <person name="El It F."/>
            <person name="Marle N."/>
            <person name="Callier P."/>
            <person name="Relator R."/>
            <person name="Haghshenas S."/>
            <person name="McConkey H."/>
            <person name="Kerkhof J."/>
            <person name="Cesario C."/>
            <person name="Novelli A."/>
            <person name="Brunetti-Pierri N."/>
            <person name="Pinelli M."/>
            <person name="Pennamen P."/>
            <person name="Naudion S."/>
            <person name="Legendre M."/>
            <person name="Courdier C."/>
            <person name="Trimouille A."/>
            <person name="Fenzy M.D."/>
            <person name="Pais L."/>
            <person name="Yeung A."/>
            <person name="Nugent K."/>
            <person name="Roeder E.R."/>
            <person name="Mitani T."/>
            <person name="Posey J.E."/>
            <person name="Calame D."/>
            <person name="Yonath H."/>
            <person name="Rosenfeld J.A."/>
            <person name="Musante L."/>
            <person name="Faletra F."/>
            <person name="Montanari F."/>
            <person name="Sartor G."/>
            <person name="Vancini A."/>
            <person name="Seri M."/>
            <person name="Besmond C."/>
            <person name="Poirier K."/>
            <person name="Hubert L."/>
            <person name="Hemelsoet D."/>
            <person name="Munnich A."/>
            <person name="Lupski J.R."/>
            <person name="Philippe C."/>
            <person name="Thauvin-Robinet C."/>
            <person name="Faivre L."/>
            <person name="Sadikovic B."/>
            <person name="Govin J."/>
            <person name="Dermaut B."/>
            <person name="Vitobello A."/>
        </authorList>
    </citation>
    <scope>VARIANTS NEDFBA LEU-24; 28-ARG--THR-248 DEL; 33-GLU--THR-248 DEL; VAL-40; ASN-44; THR-70; 77-TYR--THR-248 DEL; ARG-84; MET-160 AND ARG-183</scope>
    <scope>INVOLVEMENT IN NEDFBA</scope>
</reference>
<accession>Q07955</accession>
<accession>B2R6Z7</accession>
<accession>D3DTZ3</accession>
<accession>Q13809</accession>
<comment type="function">
    <text evidence="23">Plays a role in preventing exon skipping, ensuring the accuracy of splicing and regulating alternative splicing. Interacts with other spliceosomal components, via the RS domains, to form a bridge between the 5'- and 3'-splice site binding components, U1 snRNP and U2AF. Can stimulate binding of U1 snRNP to a 5'-splice site-containing pre-mRNA. Binds to purine-rich RNA sequences, either the octamer, 5'-RGAAGAAC-3' (r=A or G) or the decamers, AGGACAGAGC/AGGACGAAGC. Binds preferentially to the 5'-CGAGGCG-3' motif in vitro. Three copies of the octamer constitute a powerful splicing enhancer in vitro, the ASF/SF2 splicing enhancer (ASE) which can specifically activate ASE-dependent splicing. Isoform ASF-2 and isoform ASF-3 act as splicing repressors. May function as export adapter involved in mRNA nuclear export through the TAP/NXF1 pathway.</text>
</comment>
<comment type="subunit">
    <text evidence="1 4 5 7 8 9 12 13 18 19 20 21 25 26 28 29">Consists of two polypeptides of p32 and p33. Identified in the spliceosome C complex (PubMed:11991638). Component of a ribonucleoprotein complex containing mRNAs and RNA-binding proteins including DDX5, HNRNPH2 and SRSF1 as well as splicing regulator ARVCF (PubMed:24644279). In vitro, self-associates and binds SRSF2, SNRNP70 and U2AF1 but not U2AF2. Binds SREK1/SFRS12. Interacts with SAFB/SAFB1. Interacts with PSIP1/LEDGF. Interacts with RSRC1 (via Arg/Ser-rich domain). Interacts with ZRSR2/U2AF1-RS2. Interacts with CCDC55 (via C-terminus). Interacts with SRPK1 and a sliding docking interaction is essential for its sequential and processive phosphorylation by SRPK1. Interacts with NXF1. Interacts with CCNL1, CCNL2 and CDK11B (PubMed:18216018). Interacts with RRP1B (PubMed:23604122). Interacts (when phosphorylated in its RS domain) with TNPO3; promoting nuclear import (PubMed:24449914). Interacts with ILDR1 (via C-terminus) and ILDR2 (By similarity).</text>
</comment>
<comment type="interaction">
    <interactant intactId="EBI-398920">
        <id>Q07955</id>
    </interactant>
    <interactant intactId="EBI-627102">
        <id>Q86X95</id>
        <label>CIR1</label>
    </interactant>
    <organismsDiffer>false</organismsDiffer>
    <experiments>3</experiments>
</comment>
<comment type="interaction">
    <interactant intactId="EBI-398920">
        <id>Q07955</id>
    </interactant>
    <interactant intactId="EBI-11981867">
        <id>P49759-3</id>
        <label>CLK1</label>
    </interactant>
    <organismsDiffer>false</organismsDiffer>
    <experiments>3</experiments>
</comment>
<comment type="interaction">
    <interactant intactId="EBI-398920">
        <id>Q07955</id>
    </interactant>
    <interactant intactId="EBI-389739">
        <id>P23511</id>
        <label>NFYA</label>
    </interactant>
    <organismsDiffer>false</organismsDiffer>
    <experiments>5</experiments>
</comment>
<comment type="interaction">
    <interactant intactId="EBI-398920">
        <id>Q07955</id>
    </interactant>
    <interactant intactId="EBI-398874">
        <id>Q9UBU9</id>
        <label>NXF1</label>
    </interactant>
    <organismsDiffer>false</organismsDiffer>
    <experiments>6</experiments>
</comment>
<comment type="interaction">
    <interactant intactId="EBI-398920">
        <id>Q07955</id>
    </interactant>
    <interactant intactId="EBI-372051">
        <id>Q14684</id>
        <label>RRP1B</label>
    </interactant>
    <organismsDiffer>false</organismsDiffer>
    <experiments>6</experiments>
</comment>
<comment type="interaction">
    <interactant intactId="EBI-398920">
        <id>Q07955</id>
    </interactant>
    <interactant intactId="EBI-1049228">
        <id>P08621</id>
        <label>SNRNP70</label>
    </interactant>
    <organismsDiffer>false</organismsDiffer>
    <experiments>5</experiments>
</comment>
<comment type="interaction">
    <interactant intactId="EBI-398920">
        <id>Q07955</id>
    </interactant>
    <interactant intactId="EBI-539478">
        <id>Q96SB4</id>
        <label>SRPK1</label>
    </interactant>
    <organismsDiffer>false</organismsDiffer>
    <experiments>3</experiments>
</comment>
<comment type="interaction">
    <interactant intactId="EBI-398920">
        <id>Q07955</id>
    </interactant>
    <interactant intactId="EBI-593303">
        <id>P78362</id>
        <label>SRPK2</label>
    </interactant>
    <organismsDiffer>false</organismsDiffer>
    <experiments>3</experiments>
</comment>
<comment type="interaction">
    <interactant intactId="EBI-398920">
        <id>Q07955</id>
    </interactant>
    <interactant intactId="EBI-353655">
        <id>O75494</id>
        <label>SRSF10</label>
    </interactant>
    <organismsDiffer>false</organismsDiffer>
    <experiments>3</experiments>
</comment>
<comment type="interaction">
    <interactant intactId="EBI-398920">
        <id>Q07955</id>
    </interactant>
    <interactant intactId="EBI-725485">
        <id>P62995</id>
        <label>TRA2B</label>
    </interactant>
    <organismsDiffer>false</organismsDiffer>
    <experiments>3</experiments>
</comment>
<comment type="interaction">
    <interactant intactId="EBI-398920">
        <id>Q07955</id>
    </interactant>
    <interactant intactId="EBI-523498">
        <id>O00463</id>
        <label>TRAF5</label>
    </interactant>
    <organismsDiffer>false</organismsDiffer>
    <experiments>2</experiments>
</comment>
<comment type="interaction">
    <interactant intactId="EBI-398920">
        <id>Q07955</id>
    </interactant>
    <interactant intactId="EBI-632461">
        <id>Q01081</id>
        <label>U2AF1</label>
    </interactant>
    <organismsDiffer>false</organismsDiffer>
    <experiments>4</experiments>
</comment>
<comment type="interaction">
    <interactant intactId="EBI-398920">
        <id>Q07955</id>
    </interactant>
    <interactant intactId="EBI-742339">
        <id>P26368</id>
        <label>U2AF2</label>
    </interactant>
    <organismsDiffer>false</organismsDiffer>
    <experiments>4</experiments>
</comment>
<comment type="interaction">
    <interactant intactId="EBI-398920">
        <id>Q07955</id>
    </interactant>
    <interactant intactId="EBI-593343">
        <id>O70551</id>
        <label>Srpk1</label>
    </interactant>
    <organismsDiffer>true</organismsDiffer>
    <experiments>5</experiments>
</comment>
<comment type="interaction">
    <interactant intactId="EBI-398920">
        <id>Q07955</id>
    </interactant>
    <interactant intactId="EBI-593325">
        <id>O54781</id>
        <label>Srpk2</label>
    </interactant>
    <organismsDiffer>true</organismsDiffer>
    <experiments>3</experiments>
</comment>
<comment type="subcellular location">
    <subcellularLocation>
        <location evidence="6 17 20 27">Cytoplasm</location>
    </subcellularLocation>
    <subcellularLocation>
        <location evidence="6 17 20 21 27">Nucleus speckle</location>
    </subcellularLocation>
    <text evidence="6 17 20 27">In nuclear speckles. Shuttles between the nucleus and the cytoplasm (PubMed:12215544, PubMed:20308322, PubMed:24449914, PubMed:9420331). Nuclear import is mediated via interaction with TNPO3 (PubMed:24449914).</text>
</comment>
<comment type="alternative products">
    <event type="alternative splicing"/>
    <isoform>
        <id>Q07955-1</id>
        <name>ASF-1</name>
        <sequence type="displayed"/>
    </isoform>
    <isoform>
        <id>Q07955-2</id>
        <name>ASF-2</name>
        <sequence type="described" ref="VSP_005856"/>
    </isoform>
    <isoform>
        <id>Q07955-3</id>
        <name>ASF-3</name>
        <sequence type="described" ref="VSP_005857 VSP_005858"/>
    </isoform>
</comment>
<comment type="domain">
    <text evidence="13">The RRM 2 domain plays an important role in governing both the binding mode and the phosphorylation mechanism of the RS domain by SRPK1. RS domain and RRM 2 are uniquely positioned to initiate a highly directional (C-terminus to N-terminus) phosphorylation reaction in which the RS domain slides through an extended electronegative channel separating the docking groove of SRPK1 and the active site. RRM 2 binds toward the periphery of the active site and guides the directional phosphorylation mechanism. Both the RS domain and an RRM domain are required for nucleocytoplasmic shuttling.</text>
</comment>
<comment type="PTM">
    <text evidence="8 11 14 15 16">Phosphorylated by CLK1, CLK2, CLK3 and CLK4. Phosphorylated by SRPK1 at multiple serines in its RS domain via a directional (C-terminal to N-terminal) and a dual-track mechanism incorporating both processive phosphorylation (in which the kinase stays attached to the substrate after each round of phosphorylation) and distributive phosphorylation steps (in which the kinase and substrate dissociate after each phosphorylation event). The RS domain of SRSF1 binds to a docking groove in the large lobe of the kinase domain of SRPK1 and this induces certain structural changes in SRPK1 and/or RRM 2 domain of SRSF1, allowing RRM 2 to bind the kinase and initiate phosphorylation. The cycles continue for several phosphorylation steps in a processive manner (steps 1-8) until the last few phosphorylation steps (approximately steps 9-12). During that time, a mechanical stress induces the unfolding of the beta-4 motif in RRM 2, which then docks at the docking groove of SRPK1. This also signals RRM 2 to begin to dissociate, which facilitates SRSF1 dissociation after phosphorylation is completed.</text>
</comment>
<comment type="PTM">
    <text evidence="17">Asymmetrically dimethylated at arginines, probably by PRMT1, methylation promotes localization to nuclear speckles.</text>
</comment>
<comment type="disease" evidence="22">
    <disease id="DI-06735">
        <name>Neurodevelopmental disorder with dysmorphic facies and behavioral abnormalities</name>
        <acronym>NEDFBA</acronym>
        <description>An autosomal dominant disorder characterized by developmental delay, intellectual disability, speech delay, hypotonia, behavioral abnormalities, and non-specific dysmorphic facial features. Some patients have variable skeletal and cardiac anomalies.</description>
        <dbReference type="MIM" id="620489"/>
    </disease>
    <text>The disease is caused by variants affecting the gene represented in this entry.</text>
</comment>
<comment type="miscellaneous">
    <molecule>Isoform ASF-3</molecule>
    <text evidence="32">May be due to intron retention.</text>
</comment>
<comment type="similarity">
    <text evidence="32">Belongs to the splicing factor SR family.</text>
</comment>
<comment type="online information" name="Atlas of Genetics and Cytogenetics in Oncology and Haematology">
    <link uri="https://atlasgeneticsoncology.org/gene/47631/SRSF1"/>
</comment>
<organism>
    <name type="scientific">Homo sapiens</name>
    <name type="common">Human</name>
    <dbReference type="NCBI Taxonomy" id="9606"/>
    <lineage>
        <taxon>Eukaryota</taxon>
        <taxon>Metazoa</taxon>
        <taxon>Chordata</taxon>
        <taxon>Craniata</taxon>
        <taxon>Vertebrata</taxon>
        <taxon>Euteleostomi</taxon>
        <taxon>Mammalia</taxon>
        <taxon>Eutheria</taxon>
        <taxon>Euarchontoglires</taxon>
        <taxon>Primates</taxon>
        <taxon>Haplorrhini</taxon>
        <taxon>Catarrhini</taxon>
        <taxon>Hominidae</taxon>
        <taxon>Homo</taxon>
    </lineage>
</organism>
<name>SRSF1_HUMAN</name>
<sequence>MSGGGVIRGPAGNNDCRIYVGNLPPDIRTKDIEDVFYKYGAIRDIDLKNRRGGPPFAFVEFEDPRDAEDAVYGRDGYDYDGYRLRVEFPRSGRGTGRGGGGGGGGGAPRGRYGPPSRRSENRVVVSGLPPSGSWQDLKDHMREAGDVCYADVYRDGTGVVEFVRKEDMTYAVRKLDNTKFRSHEGETAYIRVKVDGPRSPSYGRSRSRSRSRSRSRSRSNSRSRSYSPRRSRGSPRYSPRHSRSRSRT</sequence>
<keyword id="KW-0002">3D-structure</keyword>
<keyword id="KW-0007">Acetylation</keyword>
<keyword id="KW-0025">Alternative splicing</keyword>
<keyword id="KW-0963">Cytoplasm</keyword>
<keyword id="KW-0903">Direct protein sequencing</keyword>
<keyword id="KW-0225">Disease variant</keyword>
<keyword id="KW-0991">Intellectual disability</keyword>
<keyword id="KW-1017">Isopeptide bond</keyword>
<keyword id="KW-0488">Methylation</keyword>
<keyword id="KW-0507">mRNA processing</keyword>
<keyword id="KW-0508">mRNA splicing</keyword>
<keyword id="KW-0509">mRNA transport</keyword>
<keyword id="KW-0539">Nucleus</keyword>
<keyword id="KW-0597">Phosphoprotein</keyword>
<keyword id="KW-1267">Proteomics identification</keyword>
<keyword id="KW-1185">Reference proteome</keyword>
<keyword id="KW-0677">Repeat</keyword>
<keyword id="KW-0694">RNA-binding</keyword>
<keyword id="KW-0747">Spliceosome</keyword>
<keyword id="KW-0813">Transport</keyword>
<keyword id="KW-0832">Ubl conjugation</keyword>
<proteinExistence type="evidence at protein level"/>
<gene>
    <name evidence="33" type="primary">SRSF1</name>
    <name type="synonym">ASF</name>
    <name type="synonym">SF2</name>
    <name type="synonym">SF2P33</name>
    <name type="synonym">SFRS1</name>
    <name type="ORF">OK/SW-cl.3</name>
</gene>